<dbReference type="EMBL" id="DV796567">
    <property type="status" value="NOT_ANNOTATED_CDS"/>
    <property type="molecule type" value="mRNA"/>
</dbReference>
<dbReference type="EMBL" id="BC110017">
    <property type="protein sequence ID" value="AAI10018.1"/>
    <property type="molecule type" value="mRNA"/>
</dbReference>
<dbReference type="RefSeq" id="NP_001030201.2">
    <molecule id="Q2TBK2-2"/>
    <property type="nucleotide sequence ID" value="NM_001035029.2"/>
</dbReference>
<dbReference type="RefSeq" id="XP_005203916.1">
    <molecule id="Q2TBK2-1"/>
    <property type="nucleotide sequence ID" value="XM_005203859.4"/>
</dbReference>
<dbReference type="SMR" id="Q2TBK2"/>
<dbReference type="FunCoup" id="Q2TBK2">
    <property type="interactions" value="3181"/>
</dbReference>
<dbReference type="STRING" id="9913.ENSBTAP00000001054"/>
<dbReference type="iPTMnet" id="Q2TBK2"/>
<dbReference type="PaxDb" id="9913-ENSBTAP00000001054"/>
<dbReference type="Ensembl" id="ENSBTAT00000001054.5">
    <molecule id="Q2TBK2-1"/>
    <property type="protein sequence ID" value="ENSBTAP00000001054.5"/>
    <property type="gene ID" value="ENSBTAG00000000797.5"/>
</dbReference>
<dbReference type="GeneID" id="505981"/>
<dbReference type="KEGG" id="bta:505981"/>
<dbReference type="CTD" id="65005"/>
<dbReference type="VEuPathDB" id="HostDB:ENSBTAG00000000797"/>
<dbReference type="eggNOG" id="KOG4607">
    <property type="taxonomic scope" value="Eukaryota"/>
</dbReference>
<dbReference type="GeneTree" id="ENSGT00390000008281"/>
<dbReference type="HOGENOM" id="CLU_078938_0_0_1"/>
<dbReference type="InParanoid" id="Q2TBK2"/>
<dbReference type="OMA" id="ASMAPRC"/>
<dbReference type="OrthoDB" id="5555409at2759"/>
<dbReference type="TreeFam" id="TF300170"/>
<dbReference type="Reactome" id="R-BTA-5389840">
    <property type="pathway name" value="Mitochondrial translation elongation"/>
</dbReference>
<dbReference type="Reactome" id="R-BTA-5419276">
    <property type="pathway name" value="Mitochondrial translation termination"/>
</dbReference>
<dbReference type="Proteomes" id="UP000009136">
    <property type="component" value="Chromosome 3"/>
</dbReference>
<dbReference type="Bgee" id="ENSBTAG00000000797">
    <property type="expression patterns" value="Expressed in gluteus medius and 108 other cell types or tissues"/>
</dbReference>
<dbReference type="GO" id="GO:0005743">
    <property type="term" value="C:mitochondrial inner membrane"/>
    <property type="evidence" value="ECO:0000304"/>
    <property type="project" value="Reactome"/>
</dbReference>
<dbReference type="GO" id="GO:0005762">
    <property type="term" value="C:mitochondrial large ribosomal subunit"/>
    <property type="evidence" value="ECO:0000250"/>
    <property type="project" value="UniProtKB"/>
</dbReference>
<dbReference type="GO" id="GO:0005739">
    <property type="term" value="C:mitochondrion"/>
    <property type="evidence" value="ECO:0000250"/>
    <property type="project" value="UniProtKB"/>
</dbReference>
<dbReference type="GO" id="GO:0003735">
    <property type="term" value="F:structural constituent of ribosome"/>
    <property type="evidence" value="ECO:0007669"/>
    <property type="project" value="InterPro"/>
</dbReference>
<dbReference type="GO" id="GO:0006412">
    <property type="term" value="P:translation"/>
    <property type="evidence" value="ECO:0007669"/>
    <property type="project" value="InterPro"/>
</dbReference>
<dbReference type="FunFam" id="3.40.5.10:FF:000005">
    <property type="entry name" value="39S ribosomal protein L9, mitochondrial"/>
    <property type="match status" value="1"/>
</dbReference>
<dbReference type="Gene3D" id="3.40.5.10">
    <property type="entry name" value="Ribosomal protein L9, N-terminal domain"/>
    <property type="match status" value="1"/>
</dbReference>
<dbReference type="InterPro" id="IPR056864">
    <property type="entry name" value="MRP-L9_N"/>
</dbReference>
<dbReference type="InterPro" id="IPR000244">
    <property type="entry name" value="Ribosomal_bL9"/>
</dbReference>
<dbReference type="InterPro" id="IPR009027">
    <property type="entry name" value="Ribosomal_bL9/RNase_H1_N"/>
</dbReference>
<dbReference type="InterPro" id="IPR020070">
    <property type="entry name" value="Ribosomal_bL9_N"/>
</dbReference>
<dbReference type="InterPro" id="IPR036935">
    <property type="entry name" value="Ribosomal_bL9_N_sf"/>
</dbReference>
<dbReference type="InterPro" id="IPR054302">
    <property type="entry name" value="Ribosomal_bL9m_C"/>
</dbReference>
<dbReference type="PANTHER" id="PTHR21368">
    <property type="entry name" value="50S RIBOSOMAL PROTEIN L9"/>
    <property type="match status" value="1"/>
</dbReference>
<dbReference type="Pfam" id="PF25131">
    <property type="entry name" value="bL9m_N"/>
    <property type="match status" value="1"/>
</dbReference>
<dbReference type="Pfam" id="PF22078">
    <property type="entry name" value="Ribosomal_bL9m_C"/>
    <property type="match status" value="1"/>
</dbReference>
<dbReference type="Pfam" id="PF01281">
    <property type="entry name" value="Ribosomal_L9_N"/>
    <property type="match status" value="1"/>
</dbReference>
<dbReference type="SUPFAM" id="SSF55658">
    <property type="entry name" value="L9 N-domain-like"/>
    <property type="match status" value="1"/>
</dbReference>
<feature type="transit peptide" description="Mitochondrion" evidence="1">
    <location>
        <begin position="1"/>
        <end position="52"/>
    </location>
</feature>
<feature type="chain" id="PRO_0000322569" description="Large ribosomal subunit protein bL9m">
    <location>
        <begin position="53"/>
        <end position="268"/>
    </location>
</feature>
<feature type="splice variant" id="VSP_031859" description="In isoform 2." evidence="2">
    <original>EYWCEVTVNGLDTVRVPM</original>
    <variation>KWTGHCEGTYVRGEL</variation>
    <location>
        <begin position="218"/>
        <end position="235"/>
    </location>
</feature>
<feature type="splice variant" id="VSP_031860" description="In isoform 2." evidence="2">
    <location>
        <begin position="236"/>
        <end position="268"/>
    </location>
</feature>
<sequence>MAAAAFAVPRGVQLRVLTERLLRGGVRELLRPRLSGSTPGSERDFSLSHSRGTVIVERWWKVPLAGEGRKPRLHRRHRVYKLVEDTKHRPKENLELILTQSVDELGVRGDLVSVKKSVGRNRLLPEGLAVYASPENKKLFEEEKLLRQEGKLDKIQTKAGEATVKFLRSCHLEVGMKNNVKWELNPEIVARHFLRNLGVVVAPHALKLPEEPITQRGEYWCEVTVNGLDTVRVPMSVVNFERPKTKRYKYWLAQQAAKGMASTSFQKI</sequence>
<name>RM09_BOVIN</name>
<proteinExistence type="evidence at protein level"/>
<keyword id="KW-0025">Alternative splicing</keyword>
<keyword id="KW-0903">Direct protein sequencing</keyword>
<keyword id="KW-0496">Mitochondrion</keyword>
<keyword id="KW-1185">Reference proteome</keyword>
<keyword id="KW-0687">Ribonucleoprotein</keyword>
<keyword id="KW-0689">Ribosomal protein</keyword>
<keyword id="KW-0809">Transit peptide</keyword>
<evidence type="ECO:0000269" key="1">
    <source>
    </source>
</evidence>
<evidence type="ECO:0000303" key="2">
    <source ref="2"/>
</evidence>
<evidence type="ECO:0000305" key="3"/>
<organism>
    <name type="scientific">Bos taurus</name>
    <name type="common">Bovine</name>
    <dbReference type="NCBI Taxonomy" id="9913"/>
    <lineage>
        <taxon>Eukaryota</taxon>
        <taxon>Metazoa</taxon>
        <taxon>Chordata</taxon>
        <taxon>Craniata</taxon>
        <taxon>Vertebrata</taxon>
        <taxon>Euteleostomi</taxon>
        <taxon>Mammalia</taxon>
        <taxon>Eutheria</taxon>
        <taxon>Laurasiatheria</taxon>
        <taxon>Artiodactyla</taxon>
        <taxon>Ruminantia</taxon>
        <taxon>Pecora</taxon>
        <taxon>Bovidae</taxon>
        <taxon>Bovinae</taxon>
        <taxon>Bos</taxon>
    </lineage>
</organism>
<gene>
    <name type="primary">MRPL9</name>
</gene>
<comment type="subunit">
    <text evidence="1">Component of the mitochondrial ribosome large subunit (39S) which comprises a 16S rRNA and about 50 distinct proteins.</text>
</comment>
<comment type="subcellular location">
    <subcellularLocation>
        <location evidence="1">Mitochondrion</location>
    </subcellularLocation>
</comment>
<comment type="alternative products">
    <event type="alternative splicing"/>
    <isoform>
        <id>Q2TBK2-1</id>
        <name>1</name>
        <sequence type="displayed"/>
    </isoform>
    <isoform>
        <id>Q2TBK2-2</id>
        <name>2</name>
        <sequence type="described" ref="VSP_031859 VSP_031860"/>
    </isoform>
</comment>
<comment type="similarity">
    <text evidence="3">Belongs to the bacterial ribosomal protein bL9 family.</text>
</comment>
<protein>
    <recommendedName>
        <fullName evidence="3">Large ribosomal subunit protein bL9m</fullName>
    </recommendedName>
    <alternativeName>
        <fullName>39S ribosomal protein L9, mitochondrial</fullName>
        <shortName>L9mt</shortName>
        <shortName>MRP-L9</shortName>
    </alternativeName>
</protein>
<reference key="1">
    <citation type="submission" date="2005-07" db="EMBL/GenBank/DDBJ databases">
        <title>Gene expression profiling of the bovine liver, adipose, and skeletal muscle.</title>
        <authorList>
            <person name="Yoon D.-H."/>
            <person name="Lee S.-H."/>
            <person name="Park E.-W."/>
            <person name="Cho Y.-M."/>
            <person name="Lee J.-H."/>
            <person name="Kim H."/>
            <person name="Kim H.-Y."/>
            <person name="Park J.-H."/>
            <person name="Oh S.-J."/>
        </authorList>
    </citation>
    <scope>NUCLEOTIDE SEQUENCE [LARGE SCALE MRNA] (ISOFORM 1)</scope>
    <source>
        <strain>Korean</strain>
        <tissue>Skeletal muscle</tissue>
    </source>
</reference>
<reference key="2">
    <citation type="submission" date="2005-11" db="EMBL/GenBank/DDBJ databases">
        <authorList>
            <consortium name="NIH - Mammalian Gene Collection (MGC) project"/>
        </authorList>
    </citation>
    <scope>NUCLEOTIDE SEQUENCE [LARGE SCALE MRNA] (ISOFORM 2)</scope>
    <source>
        <strain>Crossbred X Angus</strain>
        <tissue>Liver</tissue>
    </source>
</reference>
<reference key="3">
    <citation type="journal article" date="2001" name="J. Biol. Chem.">
        <title>Structural compensation for the deficit of rRNA with proteins in the mammalian mitochondrial ribosome. Systematic analysis of protein components of the large ribosomal subunit from mammalian mitochondria.</title>
        <authorList>
            <person name="Suzuki T."/>
            <person name="Terasaki M."/>
            <person name="Takemoto-Hori C."/>
            <person name="Hanada T."/>
            <person name="Ueda T."/>
            <person name="Wada A."/>
            <person name="Watanabe K."/>
        </authorList>
    </citation>
    <scope>PROTEIN SEQUENCE OF 53-68</scope>
    <scope>IDENTIFICATION BY MASS SPECTROMETRY</scope>
    <scope>SUBCELLULAR LOCATION</scope>
    <scope>SUBUNIT</scope>
</reference>
<accession>Q2TBK2</accession>